<proteinExistence type="predicted"/>
<dbReference type="EMBL" id="L77117">
    <property type="protein sequence ID" value="AAB98773.1"/>
    <property type="molecule type" value="Genomic_DNA"/>
</dbReference>
<dbReference type="PIR" id="F64395">
    <property type="entry name" value="F64395"/>
</dbReference>
<dbReference type="RefSeq" id="WP_010870271.1">
    <property type="nucleotide sequence ID" value="NC_000909.1"/>
</dbReference>
<dbReference type="STRING" id="243232.MJ_0766"/>
<dbReference type="PaxDb" id="243232-MJ_0766"/>
<dbReference type="EnsemblBacteria" id="AAB98773">
    <property type="protein sequence ID" value="AAB98773"/>
    <property type="gene ID" value="MJ_0766"/>
</dbReference>
<dbReference type="GeneID" id="71696675"/>
<dbReference type="KEGG" id="mja:MJ_0766"/>
<dbReference type="eggNOG" id="arCOG02639">
    <property type="taxonomic scope" value="Archaea"/>
</dbReference>
<dbReference type="HOGENOM" id="CLU_147304_5_0_2"/>
<dbReference type="InParanoid" id="Q58176"/>
<dbReference type="Proteomes" id="UP000000805">
    <property type="component" value="Chromosome"/>
</dbReference>
<dbReference type="InterPro" id="IPR014925">
    <property type="entry name" value="CGGC_dom"/>
</dbReference>
<dbReference type="Pfam" id="PF08821">
    <property type="entry name" value="CGGC"/>
    <property type="match status" value="1"/>
</dbReference>
<dbReference type="SMART" id="SM01078">
    <property type="entry name" value="CGGC"/>
    <property type="match status" value="1"/>
</dbReference>
<protein>
    <recommendedName>
        <fullName>Uncharacterized protein MJ0766</fullName>
    </recommendedName>
</protein>
<organism>
    <name type="scientific">Methanocaldococcus jannaschii (strain ATCC 43067 / DSM 2661 / JAL-1 / JCM 10045 / NBRC 100440)</name>
    <name type="common">Methanococcus jannaschii</name>
    <dbReference type="NCBI Taxonomy" id="243232"/>
    <lineage>
        <taxon>Archaea</taxon>
        <taxon>Methanobacteriati</taxon>
        <taxon>Methanobacteriota</taxon>
        <taxon>Methanomada group</taxon>
        <taxon>Methanococci</taxon>
        <taxon>Methanococcales</taxon>
        <taxon>Methanocaldococcaceae</taxon>
        <taxon>Methanocaldococcus</taxon>
    </lineage>
</organism>
<feature type="chain" id="PRO_0000107023" description="Uncharacterized protein MJ0766">
    <location>
        <begin position="1"/>
        <end position="66"/>
    </location>
</feature>
<reference key="1">
    <citation type="journal article" date="1996" name="Science">
        <title>Complete genome sequence of the methanogenic archaeon, Methanococcus jannaschii.</title>
        <authorList>
            <person name="Bult C.J."/>
            <person name="White O."/>
            <person name="Olsen G.J."/>
            <person name="Zhou L."/>
            <person name="Fleischmann R.D."/>
            <person name="Sutton G.G."/>
            <person name="Blake J.A."/>
            <person name="FitzGerald L.M."/>
            <person name="Clayton R.A."/>
            <person name="Gocayne J.D."/>
            <person name="Kerlavage A.R."/>
            <person name="Dougherty B.A."/>
            <person name="Tomb J.-F."/>
            <person name="Adams M.D."/>
            <person name="Reich C.I."/>
            <person name="Overbeek R."/>
            <person name="Kirkness E.F."/>
            <person name="Weinstock K.G."/>
            <person name="Merrick J.M."/>
            <person name="Glodek A."/>
            <person name="Scott J.L."/>
            <person name="Geoghagen N.S.M."/>
            <person name="Weidman J.F."/>
            <person name="Fuhrmann J.L."/>
            <person name="Nguyen D."/>
            <person name="Utterback T.R."/>
            <person name="Kelley J.M."/>
            <person name="Peterson J.D."/>
            <person name="Sadow P.W."/>
            <person name="Hanna M.C."/>
            <person name="Cotton M.D."/>
            <person name="Roberts K.M."/>
            <person name="Hurst M.A."/>
            <person name="Kaine B.P."/>
            <person name="Borodovsky M."/>
            <person name="Klenk H.-P."/>
            <person name="Fraser C.M."/>
            <person name="Smith H.O."/>
            <person name="Woese C.R."/>
            <person name="Venter J.C."/>
        </authorList>
    </citation>
    <scope>NUCLEOTIDE SEQUENCE [LARGE SCALE GENOMIC DNA]</scope>
    <source>
        <strain>ATCC 43067 / DSM 2661 / JAL-1 / JCM 10045 / NBRC 100440</strain>
    </source>
</reference>
<keyword id="KW-1185">Reference proteome</keyword>
<name>Y766_METJA</name>
<gene>
    <name type="ordered locus">MJ0766</name>
</gene>
<evidence type="ECO:0000305" key="1"/>
<sequence>MSVITCGGCPGRLGLNQIKQLIGKNGAEVVHFATCMTAFKPKCRYAEKMKEEIEKMGAKVVMSSHF</sequence>
<comment type="similarity">
    <text evidence="1">To M.jannaschii MJ0582.</text>
</comment>
<accession>Q58176</accession>